<protein>
    <recommendedName>
        <fullName evidence="1">NADH-quinone oxidoreductase subunit B</fullName>
        <ecNumber evidence="1">7.1.1.-</ecNumber>
    </recommendedName>
    <alternativeName>
        <fullName evidence="1">NADH dehydrogenase I subunit B</fullName>
    </alternativeName>
    <alternativeName>
        <fullName evidence="1">NDH-1 subunit B</fullName>
    </alternativeName>
</protein>
<sequence length="225" mass="25611">MDYTLTRIDPNGENDRYPLQTQETVSGDPLEQHVHRSVYMGKLENAMHDMVNWGRKNSLWPYNFGLSCCYVEMVTSFTAVHDVARFGAEVLRASPRQADFMVVAGTCFTKMAPVIQRLYEQMLEPKWVISMGACANSGGMYDIYSVVQGVDKFLPVDVYIPGCPPRPEAYMQALLLLQESIGKERRPLSWVVGDQGVYRANMQPERERKHAERIAVTNLRTPDEI</sequence>
<accession>B1JGL4</accession>
<keyword id="KW-0004">4Fe-4S</keyword>
<keyword id="KW-0997">Cell inner membrane</keyword>
<keyword id="KW-1003">Cell membrane</keyword>
<keyword id="KW-0408">Iron</keyword>
<keyword id="KW-0411">Iron-sulfur</keyword>
<keyword id="KW-0472">Membrane</keyword>
<keyword id="KW-0479">Metal-binding</keyword>
<keyword id="KW-0520">NAD</keyword>
<keyword id="KW-0874">Quinone</keyword>
<keyword id="KW-1278">Translocase</keyword>
<keyword id="KW-0813">Transport</keyword>
<keyword id="KW-0830">Ubiquinone</keyword>
<organism>
    <name type="scientific">Yersinia pseudotuberculosis serotype O:3 (strain YPIII)</name>
    <dbReference type="NCBI Taxonomy" id="502800"/>
    <lineage>
        <taxon>Bacteria</taxon>
        <taxon>Pseudomonadati</taxon>
        <taxon>Pseudomonadota</taxon>
        <taxon>Gammaproteobacteria</taxon>
        <taxon>Enterobacterales</taxon>
        <taxon>Yersiniaceae</taxon>
        <taxon>Yersinia</taxon>
    </lineage>
</organism>
<gene>
    <name evidence="1" type="primary">nuoB</name>
    <name type="ordered locus">YPK_1561</name>
</gene>
<comment type="function">
    <text evidence="1">NDH-1 shuttles electrons from NADH, via FMN and iron-sulfur (Fe-S) centers, to quinones in the respiratory chain. The immediate electron acceptor for the enzyme in this species is believed to be ubiquinone. Couples the redox reaction to proton translocation (for every two electrons transferred, four hydrogen ions are translocated across the cytoplasmic membrane), and thus conserves the redox energy in a proton gradient.</text>
</comment>
<comment type="catalytic activity">
    <reaction evidence="1">
        <text>a quinone + NADH + 5 H(+)(in) = a quinol + NAD(+) + 4 H(+)(out)</text>
        <dbReference type="Rhea" id="RHEA:57888"/>
        <dbReference type="ChEBI" id="CHEBI:15378"/>
        <dbReference type="ChEBI" id="CHEBI:24646"/>
        <dbReference type="ChEBI" id="CHEBI:57540"/>
        <dbReference type="ChEBI" id="CHEBI:57945"/>
        <dbReference type="ChEBI" id="CHEBI:132124"/>
    </reaction>
</comment>
<comment type="cofactor">
    <cofactor evidence="1">
        <name>[4Fe-4S] cluster</name>
        <dbReference type="ChEBI" id="CHEBI:49883"/>
    </cofactor>
    <text evidence="1">Binds 1 [4Fe-4S] cluster.</text>
</comment>
<comment type="subunit">
    <text evidence="1">NDH-1 is composed of 13 different subunits. Subunits NuoB, CD, E, F, and G constitute the peripheral sector of the complex.</text>
</comment>
<comment type="subcellular location">
    <subcellularLocation>
        <location evidence="1">Cell inner membrane</location>
        <topology evidence="1">Peripheral membrane protein</topology>
        <orientation evidence="1">Cytoplasmic side</orientation>
    </subcellularLocation>
</comment>
<comment type="similarity">
    <text evidence="1">Belongs to the complex I 20 kDa subunit family.</text>
</comment>
<feature type="chain" id="PRO_0000376417" description="NADH-quinone oxidoreductase subunit B">
    <location>
        <begin position="1"/>
        <end position="225"/>
    </location>
</feature>
<feature type="binding site" evidence="1">
    <location>
        <position position="68"/>
    </location>
    <ligand>
        <name>[4Fe-4S] cluster</name>
        <dbReference type="ChEBI" id="CHEBI:49883"/>
    </ligand>
</feature>
<feature type="binding site" evidence="1">
    <location>
        <position position="69"/>
    </location>
    <ligand>
        <name>[4Fe-4S] cluster</name>
        <dbReference type="ChEBI" id="CHEBI:49883"/>
    </ligand>
</feature>
<feature type="binding site" evidence="1">
    <location>
        <position position="134"/>
    </location>
    <ligand>
        <name>[4Fe-4S] cluster</name>
        <dbReference type="ChEBI" id="CHEBI:49883"/>
    </ligand>
</feature>
<feature type="binding site" evidence="1">
    <location>
        <position position="163"/>
    </location>
    <ligand>
        <name>[4Fe-4S] cluster</name>
        <dbReference type="ChEBI" id="CHEBI:49883"/>
    </ligand>
</feature>
<evidence type="ECO:0000255" key="1">
    <source>
        <dbReference type="HAMAP-Rule" id="MF_01356"/>
    </source>
</evidence>
<proteinExistence type="inferred from homology"/>
<reference key="1">
    <citation type="submission" date="2008-02" db="EMBL/GenBank/DDBJ databases">
        <title>Complete sequence of Yersinia pseudotuberculosis YPIII.</title>
        <authorList>
            <consortium name="US DOE Joint Genome Institute"/>
            <person name="Copeland A."/>
            <person name="Lucas S."/>
            <person name="Lapidus A."/>
            <person name="Glavina del Rio T."/>
            <person name="Dalin E."/>
            <person name="Tice H."/>
            <person name="Bruce D."/>
            <person name="Goodwin L."/>
            <person name="Pitluck S."/>
            <person name="Munk A.C."/>
            <person name="Brettin T."/>
            <person name="Detter J.C."/>
            <person name="Han C."/>
            <person name="Tapia R."/>
            <person name="Schmutz J."/>
            <person name="Larimer F."/>
            <person name="Land M."/>
            <person name="Hauser L."/>
            <person name="Challacombe J.F."/>
            <person name="Green L."/>
            <person name="Lindler L.E."/>
            <person name="Nikolich M.P."/>
            <person name="Richardson P."/>
        </authorList>
    </citation>
    <scope>NUCLEOTIDE SEQUENCE [LARGE SCALE GENOMIC DNA]</scope>
    <source>
        <strain>YPIII</strain>
    </source>
</reference>
<name>NUOB_YERPY</name>
<dbReference type="EC" id="7.1.1.-" evidence="1"/>
<dbReference type="EMBL" id="CP000950">
    <property type="protein sequence ID" value="ACA67854.1"/>
    <property type="molecule type" value="Genomic_DNA"/>
</dbReference>
<dbReference type="RefSeq" id="WP_002210278.1">
    <property type="nucleotide sequence ID" value="NZ_CP009792.1"/>
</dbReference>
<dbReference type="SMR" id="B1JGL4"/>
<dbReference type="KEGG" id="ypy:YPK_1561"/>
<dbReference type="PATRIC" id="fig|502800.11.peg.2205"/>
<dbReference type="GO" id="GO:0005886">
    <property type="term" value="C:plasma membrane"/>
    <property type="evidence" value="ECO:0007669"/>
    <property type="project" value="UniProtKB-SubCell"/>
</dbReference>
<dbReference type="GO" id="GO:0045271">
    <property type="term" value="C:respiratory chain complex I"/>
    <property type="evidence" value="ECO:0007669"/>
    <property type="project" value="TreeGrafter"/>
</dbReference>
<dbReference type="GO" id="GO:0051539">
    <property type="term" value="F:4 iron, 4 sulfur cluster binding"/>
    <property type="evidence" value="ECO:0007669"/>
    <property type="project" value="UniProtKB-KW"/>
</dbReference>
<dbReference type="GO" id="GO:0005506">
    <property type="term" value="F:iron ion binding"/>
    <property type="evidence" value="ECO:0007669"/>
    <property type="project" value="UniProtKB-UniRule"/>
</dbReference>
<dbReference type="GO" id="GO:0008137">
    <property type="term" value="F:NADH dehydrogenase (ubiquinone) activity"/>
    <property type="evidence" value="ECO:0007669"/>
    <property type="project" value="InterPro"/>
</dbReference>
<dbReference type="GO" id="GO:0050136">
    <property type="term" value="F:NADH:ubiquinone reductase (non-electrogenic) activity"/>
    <property type="evidence" value="ECO:0007669"/>
    <property type="project" value="UniProtKB-UniRule"/>
</dbReference>
<dbReference type="GO" id="GO:0048038">
    <property type="term" value="F:quinone binding"/>
    <property type="evidence" value="ECO:0007669"/>
    <property type="project" value="UniProtKB-KW"/>
</dbReference>
<dbReference type="GO" id="GO:0009060">
    <property type="term" value="P:aerobic respiration"/>
    <property type="evidence" value="ECO:0007669"/>
    <property type="project" value="TreeGrafter"/>
</dbReference>
<dbReference type="GO" id="GO:0015990">
    <property type="term" value="P:electron transport coupled proton transport"/>
    <property type="evidence" value="ECO:0007669"/>
    <property type="project" value="TreeGrafter"/>
</dbReference>
<dbReference type="FunFam" id="3.40.50.12280:FF:000002">
    <property type="entry name" value="NADH-quinone oxidoreductase subunit B"/>
    <property type="match status" value="1"/>
</dbReference>
<dbReference type="Gene3D" id="3.40.50.12280">
    <property type="match status" value="1"/>
</dbReference>
<dbReference type="HAMAP" id="MF_01356">
    <property type="entry name" value="NDH1_NuoB"/>
    <property type="match status" value="1"/>
</dbReference>
<dbReference type="InterPro" id="IPR006137">
    <property type="entry name" value="NADH_UbQ_OxRdtase-like_20kDa"/>
</dbReference>
<dbReference type="InterPro" id="IPR006138">
    <property type="entry name" value="NADH_UQ_OxRdtase_20Kd_su"/>
</dbReference>
<dbReference type="NCBIfam" id="TIGR01957">
    <property type="entry name" value="nuoB_fam"/>
    <property type="match status" value="1"/>
</dbReference>
<dbReference type="NCBIfam" id="NF005012">
    <property type="entry name" value="PRK06411.1"/>
    <property type="match status" value="1"/>
</dbReference>
<dbReference type="PANTHER" id="PTHR11995">
    <property type="entry name" value="NADH DEHYDROGENASE"/>
    <property type="match status" value="1"/>
</dbReference>
<dbReference type="PANTHER" id="PTHR11995:SF14">
    <property type="entry name" value="NADH DEHYDROGENASE [UBIQUINONE] IRON-SULFUR PROTEIN 7, MITOCHONDRIAL"/>
    <property type="match status" value="1"/>
</dbReference>
<dbReference type="Pfam" id="PF01058">
    <property type="entry name" value="Oxidored_q6"/>
    <property type="match status" value="1"/>
</dbReference>
<dbReference type="SUPFAM" id="SSF56770">
    <property type="entry name" value="HydA/Nqo6-like"/>
    <property type="match status" value="1"/>
</dbReference>
<dbReference type="PROSITE" id="PS01150">
    <property type="entry name" value="COMPLEX1_20K"/>
    <property type="match status" value="1"/>
</dbReference>